<evidence type="ECO:0000255" key="1">
    <source>
        <dbReference type="HAMAP-Rule" id="MF_00182"/>
    </source>
</evidence>
<name>FMT_STRPJ</name>
<feature type="chain" id="PRO_1000190044" description="Methionyl-tRNA formyltransferase">
    <location>
        <begin position="1"/>
        <end position="311"/>
    </location>
</feature>
<feature type="binding site" evidence="1">
    <location>
        <begin position="110"/>
        <end position="113"/>
    </location>
    <ligand>
        <name>(6S)-5,6,7,8-tetrahydrofolate</name>
        <dbReference type="ChEBI" id="CHEBI:57453"/>
    </ligand>
</feature>
<gene>
    <name evidence="1" type="primary">fmt</name>
    <name type="ordered locus">SPN23F17380</name>
</gene>
<protein>
    <recommendedName>
        <fullName evidence="1">Methionyl-tRNA formyltransferase</fullName>
        <ecNumber evidence="1">2.1.2.9</ecNumber>
    </recommendedName>
</protein>
<proteinExistence type="inferred from homology"/>
<accession>B8ZMJ8</accession>
<sequence>MTKLIFMGTPDFSATVLKGLLTDDRYEILAVVTQPDRAVGRKKVIQETPVKQAAKEAGLSIYQPEKLSGSPEMEELMKLGADGIVTAAFGQFLPSKLLDSMDFAVNVHASLLPRHRGGAPIHYALIQGDEEAGVTIMEMVKEMDAGDMISRRSIPITDEDNVGTLFEKLALVGRDLLLDTLPAYIAGDIKPEPQDTSQVTFSPNIKPEEEKLDWNKTNRQLFNQIRGMNPWPVAHAFLKGDRFKIYEALPVEGQGNPGEILSIGKKELIVATAEGALSLKQVQPAGKPKMDIASFLNGVGRTLTVGERFGD</sequence>
<organism>
    <name type="scientific">Streptococcus pneumoniae (strain ATCC 700669 / Spain 23F-1)</name>
    <dbReference type="NCBI Taxonomy" id="561276"/>
    <lineage>
        <taxon>Bacteria</taxon>
        <taxon>Bacillati</taxon>
        <taxon>Bacillota</taxon>
        <taxon>Bacilli</taxon>
        <taxon>Lactobacillales</taxon>
        <taxon>Streptococcaceae</taxon>
        <taxon>Streptococcus</taxon>
    </lineage>
</organism>
<keyword id="KW-0648">Protein biosynthesis</keyword>
<keyword id="KW-0808">Transferase</keyword>
<reference key="1">
    <citation type="journal article" date="2009" name="J. Bacteriol.">
        <title>Role of conjugative elements in the evolution of the multidrug-resistant pandemic clone Streptococcus pneumoniae Spain23F ST81.</title>
        <authorList>
            <person name="Croucher N.J."/>
            <person name="Walker D."/>
            <person name="Romero P."/>
            <person name="Lennard N."/>
            <person name="Paterson G.K."/>
            <person name="Bason N.C."/>
            <person name="Mitchell A.M."/>
            <person name="Quail M.A."/>
            <person name="Andrew P.W."/>
            <person name="Parkhill J."/>
            <person name="Bentley S.D."/>
            <person name="Mitchell T.J."/>
        </authorList>
    </citation>
    <scope>NUCLEOTIDE SEQUENCE [LARGE SCALE GENOMIC DNA]</scope>
    <source>
        <strain>ATCC 700669 / Spain 23F-1</strain>
    </source>
</reference>
<comment type="function">
    <text evidence="1">Attaches a formyl group to the free amino group of methionyl-tRNA(fMet). The formyl group appears to play a dual role in the initiator identity of N-formylmethionyl-tRNA by promoting its recognition by IF2 and preventing the misappropriation of this tRNA by the elongation apparatus.</text>
</comment>
<comment type="catalytic activity">
    <reaction evidence="1">
        <text>L-methionyl-tRNA(fMet) + (6R)-10-formyltetrahydrofolate = N-formyl-L-methionyl-tRNA(fMet) + (6S)-5,6,7,8-tetrahydrofolate + H(+)</text>
        <dbReference type="Rhea" id="RHEA:24380"/>
        <dbReference type="Rhea" id="RHEA-COMP:9952"/>
        <dbReference type="Rhea" id="RHEA-COMP:9953"/>
        <dbReference type="ChEBI" id="CHEBI:15378"/>
        <dbReference type="ChEBI" id="CHEBI:57453"/>
        <dbReference type="ChEBI" id="CHEBI:78530"/>
        <dbReference type="ChEBI" id="CHEBI:78844"/>
        <dbReference type="ChEBI" id="CHEBI:195366"/>
        <dbReference type="EC" id="2.1.2.9"/>
    </reaction>
</comment>
<comment type="similarity">
    <text evidence="1">Belongs to the Fmt family.</text>
</comment>
<dbReference type="EC" id="2.1.2.9" evidence="1"/>
<dbReference type="EMBL" id="FM211187">
    <property type="protein sequence ID" value="CAR69505.1"/>
    <property type="molecule type" value="Genomic_DNA"/>
</dbReference>
<dbReference type="RefSeq" id="WP_000163704.1">
    <property type="nucleotide sequence ID" value="NC_011900.1"/>
</dbReference>
<dbReference type="SMR" id="B8ZMJ8"/>
<dbReference type="KEGG" id="sne:SPN23F17380"/>
<dbReference type="HOGENOM" id="CLU_033347_1_1_9"/>
<dbReference type="GO" id="GO:0005829">
    <property type="term" value="C:cytosol"/>
    <property type="evidence" value="ECO:0007669"/>
    <property type="project" value="TreeGrafter"/>
</dbReference>
<dbReference type="GO" id="GO:0004479">
    <property type="term" value="F:methionyl-tRNA formyltransferase activity"/>
    <property type="evidence" value="ECO:0007669"/>
    <property type="project" value="UniProtKB-UniRule"/>
</dbReference>
<dbReference type="CDD" id="cd08646">
    <property type="entry name" value="FMT_core_Met-tRNA-FMT_N"/>
    <property type="match status" value="1"/>
</dbReference>
<dbReference type="CDD" id="cd08704">
    <property type="entry name" value="Met_tRNA_FMT_C"/>
    <property type="match status" value="1"/>
</dbReference>
<dbReference type="FunFam" id="3.10.25.10:FF:000004">
    <property type="entry name" value="Methionyl-tRNA formyltransferase"/>
    <property type="match status" value="1"/>
</dbReference>
<dbReference type="FunFam" id="3.40.50.170:FF:000004">
    <property type="entry name" value="Methionyl-tRNA formyltransferase"/>
    <property type="match status" value="1"/>
</dbReference>
<dbReference type="Gene3D" id="3.10.25.10">
    <property type="entry name" value="Formyl transferase, C-terminal domain"/>
    <property type="match status" value="1"/>
</dbReference>
<dbReference type="Gene3D" id="3.40.50.170">
    <property type="entry name" value="Formyl transferase, N-terminal domain"/>
    <property type="match status" value="1"/>
</dbReference>
<dbReference type="HAMAP" id="MF_00182">
    <property type="entry name" value="Formyl_trans"/>
    <property type="match status" value="1"/>
</dbReference>
<dbReference type="InterPro" id="IPR005794">
    <property type="entry name" value="Fmt"/>
</dbReference>
<dbReference type="InterPro" id="IPR005793">
    <property type="entry name" value="Formyl_trans_C"/>
</dbReference>
<dbReference type="InterPro" id="IPR037022">
    <property type="entry name" value="Formyl_trans_C_sf"/>
</dbReference>
<dbReference type="InterPro" id="IPR002376">
    <property type="entry name" value="Formyl_transf_N"/>
</dbReference>
<dbReference type="InterPro" id="IPR036477">
    <property type="entry name" value="Formyl_transf_N_sf"/>
</dbReference>
<dbReference type="InterPro" id="IPR011034">
    <property type="entry name" value="Formyl_transferase-like_C_sf"/>
</dbReference>
<dbReference type="InterPro" id="IPR001555">
    <property type="entry name" value="GART_AS"/>
</dbReference>
<dbReference type="InterPro" id="IPR044135">
    <property type="entry name" value="Met-tRNA-FMT_C"/>
</dbReference>
<dbReference type="InterPro" id="IPR041711">
    <property type="entry name" value="Met-tRNA-FMT_N"/>
</dbReference>
<dbReference type="NCBIfam" id="TIGR00460">
    <property type="entry name" value="fmt"/>
    <property type="match status" value="1"/>
</dbReference>
<dbReference type="PANTHER" id="PTHR11138">
    <property type="entry name" value="METHIONYL-TRNA FORMYLTRANSFERASE"/>
    <property type="match status" value="1"/>
</dbReference>
<dbReference type="PANTHER" id="PTHR11138:SF5">
    <property type="entry name" value="METHIONYL-TRNA FORMYLTRANSFERASE, MITOCHONDRIAL"/>
    <property type="match status" value="1"/>
</dbReference>
<dbReference type="Pfam" id="PF02911">
    <property type="entry name" value="Formyl_trans_C"/>
    <property type="match status" value="1"/>
</dbReference>
<dbReference type="Pfam" id="PF00551">
    <property type="entry name" value="Formyl_trans_N"/>
    <property type="match status" value="1"/>
</dbReference>
<dbReference type="SUPFAM" id="SSF50486">
    <property type="entry name" value="FMT C-terminal domain-like"/>
    <property type="match status" value="1"/>
</dbReference>
<dbReference type="SUPFAM" id="SSF53328">
    <property type="entry name" value="Formyltransferase"/>
    <property type="match status" value="1"/>
</dbReference>
<dbReference type="PROSITE" id="PS00373">
    <property type="entry name" value="GART"/>
    <property type="match status" value="1"/>
</dbReference>